<dbReference type="EC" id="7.1.1.-"/>
<dbReference type="EMBL" id="BA000039">
    <property type="protein sequence ID" value="BAC07570.1"/>
    <property type="molecule type" value="Genomic_DNA"/>
</dbReference>
<dbReference type="RefSeq" id="NP_680808.1">
    <property type="nucleotide sequence ID" value="NC_004113.1"/>
</dbReference>
<dbReference type="RefSeq" id="WP_011055872.1">
    <property type="nucleotide sequence ID" value="NC_004113.1"/>
</dbReference>
<dbReference type="PDB" id="6HUM">
    <property type="method" value="EM"/>
    <property type="resolution" value="3.34 A"/>
    <property type="chains" value="O=1-70"/>
</dbReference>
<dbReference type="PDB" id="6KHI">
    <property type="method" value="EM"/>
    <property type="resolution" value="3.00 A"/>
    <property type="chains" value="O=1-70"/>
</dbReference>
<dbReference type="PDB" id="6KHJ">
    <property type="method" value="EM"/>
    <property type="resolution" value="3.00 A"/>
    <property type="chains" value="O=1-70"/>
</dbReference>
<dbReference type="PDB" id="6L7O">
    <property type="method" value="EM"/>
    <property type="resolution" value="3.20 A"/>
    <property type="chains" value="O=1-70"/>
</dbReference>
<dbReference type="PDB" id="6L7P">
    <property type="method" value="EM"/>
    <property type="resolution" value="3.60 A"/>
    <property type="chains" value="O=1-70"/>
</dbReference>
<dbReference type="PDB" id="6NBQ">
    <property type="method" value="EM"/>
    <property type="resolution" value="3.10 A"/>
    <property type="chains" value="O=1-70"/>
</dbReference>
<dbReference type="PDB" id="6NBX">
    <property type="method" value="EM"/>
    <property type="resolution" value="3.50 A"/>
    <property type="chains" value="O=1-70"/>
</dbReference>
<dbReference type="PDB" id="6NBY">
    <property type="method" value="EM"/>
    <property type="resolution" value="3.10 A"/>
    <property type="chains" value="O=1-70"/>
</dbReference>
<dbReference type="PDB" id="6TJV">
    <property type="method" value="EM"/>
    <property type="resolution" value="3.20 A"/>
    <property type="chains" value="O=1-70"/>
</dbReference>
<dbReference type="PDBsum" id="6HUM"/>
<dbReference type="PDBsum" id="6KHI"/>
<dbReference type="PDBsum" id="6KHJ"/>
<dbReference type="PDBsum" id="6L7O"/>
<dbReference type="PDBsum" id="6L7P"/>
<dbReference type="PDBsum" id="6NBQ"/>
<dbReference type="PDBsum" id="6NBX"/>
<dbReference type="PDBsum" id="6NBY"/>
<dbReference type="PDBsum" id="6TJV"/>
<dbReference type="EMDB" id="EMD-0281"/>
<dbReference type="EMDB" id="EMD-0415"/>
<dbReference type="EMDB" id="EMD-0425"/>
<dbReference type="EMDB" id="EMD-0849"/>
<dbReference type="EMDB" id="EMD-0850"/>
<dbReference type="EMDB" id="EMD-10513"/>
<dbReference type="EMDB" id="EMD-9989"/>
<dbReference type="EMDB" id="EMD-9990"/>
<dbReference type="SMR" id="Q8DMU4"/>
<dbReference type="IntAct" id="Q8DMU4">
    <property type="interactions" value="1"/>
</dbReference>
<dbReference type="STRING" id="197221.gene:10746595"/>
<dbReference type="TCDB" id="3.D.1.8.2">
    <property type="family name" value="the h+ or na+-translocating nadh dehydrogenase (ndh) family"/>
</dbReference>
<dbReference type="EnsemblBacteria" id="BAC07570">
    <property type="protein sequence ID" value="BAC07570"/>
    <property type="gene ID" value="BAC07570"/>
</dbReference>
<dbReference type="KEGG" id="tel:tsl0017"/>
<dbReference type="eggNOG" id="ENOG5032XZT">
    <property type="taxonomic scope" value="Bacteria"/>
</dbReference>
<dbReference type="Proteomes" id="UP000000440">
    <property type="component" value="Chromosome"/>
</dbReference>
<dbReference type="GO" id="GO:0031676">
    <property type="term" value="C:plasma membrane-derived thylakoid membrane"/>
    <property type="evidence" value="ECO:0007669"/>
    <property type="project" value="UniProtKB-SubCell"/>
</dbReference>
<dbReference type="GO" id="GO:0016655">
    <property type="term" value="F:oxidoreductase activity, acting on NAD(P)H, quinone or similar compound as acceptor"/>
    <property type="evidence" value="ECO:0007669"/>
    <property type="project" value="UniProtKB-UniRule"/>
</dbReference>
<dbReference type="GO" id="GO:0048038">
    <property type="term" value="F:quinone binding"/>
    <property type="evidence" value="ECO:0007669"/>
    <property type="project" value="UniProtKB-KW"/>
</dbReference>
<dbReference type="HAMAP" id="MF_01354">
    <property type="entry name" value="NDH1_NDH1O"/>
    <property type="match status" value="1"/>
</dbReference>
<dbReference type="InterPro" id="IPR020905">
    <property type="entry name" value="NdhO"/>
</dbReference>
<dbReference type="Pfam" id="PF11910">
    <property type="entry name" value="NdhO"/>
    <property type="match status" value="1"/>
</dbReference>
<sequence length="70" mass="7867">MAIKKGDLVKVVAEKLANSLEALASDHRYPPYLFEGRGEVVDIRGDYAQIKFPVPTPTVWLRLDQLEVAQ</sequence>
<name>NDHO_THEVB</name>
<accession>Q8DMU4</accession>
<proteinExistence type="evidence at protein level"/>
<comment type="function">
    <text evidence="1">NDH-1 shuttles electrons from an unknown electron donor, via FMN and iron-sulfur (Fe-S) centers, to quinones in the respiratory and/or the photosynthetic chain. The immediate electron acceptor for the enzyme in this species is believed to be plastoquinone. Couples the redox reaction to proton translocation, and thus conserves the redox energy in a proton gradient. Cyanobacterial NDH-1 also plays a role in inorganic carbon-concentration (By similarity).</text>
</comment>
<comment type="catalytic activity">
    <reaction>
        <text>a plastoquinone + NADH + (n+1) H(+)(in) = a plastoquinol + NAD(+) + n H(+)(out)</text>
        <dbReference type="Rhea" id="RHEA:42608"/>
        <dbReference type="Rhea" id="RHEA-COMP:9561"/>
        <dbReference type="Rhea" id="RHEA-COMP:9562"/>
        <dbReference type="ChEBI" id="CHEBI:15378"/>
        <dbReference type="ChEBI" id="CHEBI:17757"/>
        <dbReference type="ChEBI" id="CHEBI:57540"/>
        <dbReference type="ChEBI" id="CHEBI:57945"/>
        <dbReference type="ChEBI" id="CHEBI:62192"/>
    </reaction>
</comment>
<comment type="catalytic activity">
    <reaction>
        <text>a plastoquinone + NADPH + (n+1) H(+)(in) = a plastoquinol + NADP(+) + n H(+)(out)</text>
        <dbReference type="Rhea" id="RHEA:42612"/>
        <dbReference type="Rhea" id="RHEA-COMP:9561"/>
        <dbReference type="Rhea" id="RHEA-COMP:9562"/>
        <dbReference type="ChEBI" id="CHEBI:15378"/>
        <dbReference type="ChEBI" id="CHEBI:17757"/>
        <dbReference type="ChEBI" id="CHEBI:57783"/>
        <dbReference type="ChEBI" id="CHEBI:58349"/>
        <dbReference type="ChEBI" id="CHEBI:62192"/>
    </reaction>
</comment>
<comment type="subunit">
    <text>NDH-1 can be composed of about 15 different subunits; different subcomplexes with different compositions have been identified which probably have different functions.</text>
</comment>
<comment type="subcellular location">
    <subcellularLocation>
        <location evidence="2">Cellular thylakoid membrane</location>
        <topology evidence="2">Peripheral membrane protein</topology>
        <orientation evidence="2">Cytoplasmic side</orientation>
    </subcellularLocation>
</comment>
<comment type="similarity">
    <text evidence="2">Belongs to the complex I NdhO subunit family.</text>
</comment>
<organism>
    <name type="scientific">Thermosynechococcus vestitus (strain NIES-2133 / IAM M-273 / BP-1)</name>
    <dbReference type="NCBI Taxonomy" id="197221"/>
    <lineage>
        <taxon>Bacteria</taxon>
        <taxon>Bacillati</taxon>
        <taxon>Cyanobacteriota</taxon>
        <taxon>Cyanophyceae</taxon>
        <taxon>Acaryochloridales</taxon>
        <taxon>Thermosynechococcaceae</taxon>
        <taxon>Thermosynechococcus</taxon>
    </lineage>
</organism>
<protein>
    <recommendedName>
        <fullName>NAD(P)H-quinone oxidoreductase subunit O</fullName>
        <ecNumber>7.1.1.-</ecNumber>
    </recommendedName>
    <alternativeName>
        <fullName>NAD(P)H dehydrogenase I subunit O</fullName>
    </alternativeName>
    <alternativeName>
        <fullName>NDH-1 subunit O</fullName>
    </alternativeName>
    <alternativeName>
        <fullName>NDH-O</fullName>
    </alternativeName>
</protein>
<feature type="chain" id="PRO_0000353651" description="NAD(P)H-quinone oxidoreductase subunit O">
    <location>
        <begin position="1"/>
        <end position="70"/>
    </location>
</feature>
<feature type="strand" evidence="3">
    <location>
        <begin position="8"/>
        <end position="11"/>
    </location>
</feature>
<feature type="turn" evidence="3">
    <location>
        <begin position="14"/>
        <end position="16"/>
    </location>
</feature>
<feature type="strand" evidence="3">
    <location>
        <begin position="17"/>
        <end position="19"/>
    </location>
</feature>
<feature type="strand" evidence="3">
    <location>
        <begin position="22"/>
        <end position="25"/>
    </location>
</feature>
<feature type="turn" evidence="3">
    <location>
        <begin position="31"/>
        <end position="34"/>
    </location>
</feature>
<feature type="strand" evidence="3">
    <location>
        <begin position="38"/>
        <end position="51"/>
    </location>
</feature>
<feature type="strand" evidence="3">
    <location>
        <begin position="53"/>
        <end position="56"/>
    </location>
</feature>
<feature type="strand" evidence="3">
    <location>
        <begin position="59"/>
        <end position="62"/>
    </location>
</feature>
<feature type="helix" evidence="3">
    <location>
        <begin position="63"/>
        <end position="65"/>
    </location>
</feature>
<feature type="strand" evidence="3">
    <location>
        <begin position="66"/>
        <end position="68"/>
    </location>
</feature>
<keyword id="KW-0002">3D-structure</keyword>
<keyword id="KW-0903">Direct protein sequencing</keyword>
<keyword id="KW-0472">Membrane</keyword>
<keyword id="KW-0520">NAD</keyword>
<keyword id="KW-0521">NADP</keyword>
<keyword id="KW-0618">Plastoquinone</keyword>
<keyword id="KW-0874">Quinone</keyword>
<keyword id="KW-1185">Reference proteome</keyword>
<keyword id="KW-0793">Thylakoid</keyword>
<keyword id="KW-1278">Translocase</keyword>
<keyword id="KW-0813">Transport</keyword>
<reference key="1">
    <citation type="journal article" date="2002" name="DNA Res.">
        <title>Complete genome structure of the thermophilic cyanobacterium Thermosynechococcus elongatus BP-1.</title>
        <authorList>
            <person name="Nakamura Y."/>
            <person name="Kaneko T."/>
            <person name="Sato S."/>
            <person name="Ikeuchi M."/>
            <person name="Katoh H."/>
            <person name="Sasamoto S."/>
            <person name="Watanabe A."/>
            <person name="Iriguchi M."/>
            <person name="Kawashima K."/>
            <person name="Kimura T."/>
            <person name="Kishida Y."/>
            <person name="Kiyokawa C."/>
            <person name="Kohara M."/>
            <person name="Matsumoto M."/>
            <person name="Matsuno A."/>
            <person name="Nakazaki N."/>
            <person name="Shimpo S."/>
            <person name="Sugimoto M."/>
            <person name="Takeuchi C."/>
            <person name="Yamada M."/>
            <person name="Tabata S."/>
        </authorList>
    </citation>
    <scope>NUCLEOTIDE SEQUENCE [LARGE SCALE GENOMIC DNA]</scope>
    <source>
        <strain>NIES-2133 / IAM M-273 / BP-1</strain>
    </source>
</reference>
<reference key="2">
    <citation type="journal article" date="2005" name="Biochem. J.">
        <title>Isolation, subunit composition and interaction of the NDH-1 complexes from Thermosynechococcus elongatus BP-1.</title>
        <authorList>
            <person name="Zhang P."/>
            <person name="Battchikova N."/>
            <person name="Paakkarinen V."/>
            <person name="Katoh H."/>
            <person name="Iwai M."/>
            <person name="Ikeuchi M."/>
            <person name="Pakrasi H.B."/>
            <person name="Ogawa T."/>
            <person name="Aro E.-M."/>
        </authorList>
    </citation>
    <scope>PROTEIN SEQUENCE OF 16-44 AND 52-70</scope>
    <scope>CHARACTERIZATION AS A MEMBER OF THE NAD(P)H-QUINONE OXIDOREDUCTASE COMPLEX</scope>
    <scope>SUBCOMPLEXES OF NDH-1</scope>
</reference>
<evidence type="ECO:0000250" key="1"/>
<evidence type="ECO:0000305" key="2"/>
<evidence type="ECO:0007829" key="3">
    <source>
        <dbReference type="PDB" id="6KHI"/>
    </source>
</evidence>
<gene>
    <name type="primary">ndhO</name>
    <name type="ordered locus">tsl0017</name>
</gene>